<evidence type="ECO:0000255" key="1">
    <source>
        <dbReference type="HAMAP-Rule" id="MF_00634"/>
    </source>
</evidence>
<dbReference type="EMBL" id="AE014299">
    <property type="protein sequence ID" value="AAN56354.1"/>
    <property type="molecule type" value="Genomic_DNA"/>
</dbReference>
<dbReference type="RefSeq" id="NP_718910.1">
    <property type="nucleotide sequence ID" value="NC_004347.2"/>
</dbReference>
<dbReference type="SMR" id="Q8EBY9"/>
<dbReference type="STRING" id="211586.SO_3356"/>
<dbReference type="PaxDb" id="211586-SO_3356"/>
<dbReference type="KEGG" id="son:SO_3356"/>
<dbReference type="PATRIC" id="fig|211586.12.peg.3256"/>
<dbReference type="eggNOG" id="COG1872">
    <property type="taxonomic scope" value="Bacteria"/>
</dbReference>
<dbReference type="HOGENOM" id="CLU_130694_5_0_6"/>
<dbReference type="OrthoDB" id="9800587at2"/>
<dbReference type="PhylomeDB" id="Q8EBY9"/>
<dbReference type="BioCyc" id="SONE211586:G1GMP-3123-MONOMER"/>
<dbReference type="Proteomes" id="UP000008186">
    <property type="component" value="Chromosome"/>
</dbReference>
<dbReference type="GO" id="GO:0005737">
    <property type="term" value="C:cytoplasm"/>
    <property type="evidence" value="ECO:0000318"/>
    <property type="project" value="GO_Central"/>
</dbReference>
<dbReference type="Gene3D" id="3.30.1200.10">
    <property type="entry name" value="YggU-like"/>
    <property type="match status" value="1"/>
</dbReference>
<dbReference type="HAMAP" id="MF_00634">
    <property type="entry name" value="UPF0235"/>
    <property type="match status" value="1"/>
</dbReference>
<dbReference type="InterPro" id="IPR003746">
    <property type="entry name" value="DUF167"/>
</dbReference>
<dbReference type="InterPro" id="IPR036591">
    <property type="entry name" value="YggU-like_sf"/>
</dbReference>
<dbReference type="NCBIfam" id="TIGR00251">
    <property type="entry name" value="DUF167 family protein"/>
    <property type="match status" value="1"/>
</dbReference>
<dbReference type="NCBIfam" id="NF003466">
    <property type="entry name" value="PRK05090.1"/>
    <property type="match status" value="1"/>
</dbReference>
<dbReference type="PANTHER" id="PTHR13420">
    <property type="entry name" value="UPF0235 PROTEIN C15ORF40"/>
    <property type="match status" value="1"/>
</dbReference>
<dbReference type="PANTHER" id="PTHR13420:SF7">
    <property type="entry name" value="UPF0235 PROTEIN C15ORF40"/>
    <property type="match status" value="1"/>
</dbReference>
<dbReference type="Pfam" id="PF02594">
    <property type="entry name" value="DUF167"/>
    <property type="match status" value="1"/>
</dbReference>
<dbReference type="SMART" id="SM01152">
    <property type="entry name" value="DUF167"/>
    <property type="match status" value="1"/>
</dbReference>
<dbReference type="SUPFAM" id="SSF69786">
    <property type="entry name" value="YggU-like"/>
    <property type="match status" value="1"/>
</dbReference>
<proteinExistence type="inferred from homology"/>
<protein>
    <recommendedName>
        <fullName evidence="1">UPF0235 protein SO_3356</fullName>
    </recommendedName>
</protein>
<feature type="chain" id="PRO_0000139456" description="UPF0235 protein SO_3356">
    <location>
        <begin position="1"/>
        <end position="96"/>
    </location>
</feature>
<gene>
    <name type="ordered locus">SO_3356</name>
</gene>
<name>Y3356_SHEON</name>
<sequence>MSAVIMQQGDLLLNLYIQPKASRDQIVGLHGDELKVAITAPPIDGKANAHLSKYLAKAFKVPKSDVHILKGELGRHKQVRINAPKSVPAEISALLE</sequence>
<accession>Q8EBY9</accession>
<organism>
    <name type="scientific">Shewanella oneidensis (strain ATCC 700550 / JCM 31522 / CIP 106686 / LMG 19005 / NCIMB 14063 / MR-1)</name>
    <dbReference type="NCBI Taxonomy" id="211586"/>
    <lineage>
        <taxon>Bacteria</taxon>
        <taxon>Pseudomonadati</taxon>
        <taxon>Pseudomonadota</taxon>
        <taxon>Gammaproteobacteria</taxon>
        <taxon>Alteromonadales</taxon>
        <taxon>Shewanellaceae</taxon>
        <taxon>Shewanella</taxon>
    </lineage>
</organism>
<reference key="1">
    <citation type="journal article" date="2002" name="Nat. Biotechnol.">
        <title>Genome sequence of the dissimilatory metal ion-reducing bacterium Shewanella oneidensis.</title>
        <authorList>
            <person name="Heidelberg J.F."/>
            <person name="Paulsen I.T."/>
            <person name="Nelson K.E."/>
            <person name="Gaidos E.J."/>
            <person name="Nelson W.C."/>
            <person name="Read T.D."/>
            <person name="Eisen J.A."/>
            <person name="Seshadri R."/>
            <person name="Ward N.L."/>
            <person name="Methe B.A."/>
            <person name="Clayton R.A."/>
            <person name="Meyer T."/>
            <person name="Tsapin A."/>
            <person name="Scott J."/>
            <person name="Beanan M.J."/>
            <person name="Brinkac L.M."/>
            <person name="Daugherty S.C."/>
            <person name="DeBoy R.T."/>
            <person name="Dodson R.J."/>
            <person name="Durkin A.S."/>
            <person name="Haft D.H."/>
            <person name="Kolonay J.F."/>
            <person name="Madupu R."/>
            <person name="Peterson J.D."/>
            <person name="Umayam L.A."/>
            <person name="White O."/>
            <person name="Wolf A.M."/>
            <person name="Vamathevan J.J."/>
            <person name="Weidman J.F."/>
            <person name="Impraim M."/>
            <person name="Lee K."/>
            <person name="Berry K.J."/>
            <person name="Lee C."/>
            <person name="Mueller J."/>
            <person name="Khouri H.M."/>
            <person name="Gill J."/>
            <person name="Utterback T.R."/>
            <person name="McDonald L.A."/>
            <person name="Feldblyum T.V."/>
            <person name="Smith H.O."/>
            <person name="Venter J.C."/>
            <person name="Nealson K.H."/>
            <person name="Fraser C.M."/>
        </authorList>
    </citation>
    <scope>NUCLEOTIDE SEQUENCE [LARGE SCALE GENOMIC DNA]</scope>
    <source>
        <strain>ATCC 700550 / JCM 31522 / CIP 106686 / LMG 19005 / NCIMB 14063 / MR-1</strain>
    </source>
</reference>
<comment type="similarity">
    <text evidence="1">Belongs to the UPF0235 family.</text>
</comment>
<keyword id="KW-1185">Reference proteome</keyword>